<comment type="function">
    <text evidence="1">During stationary phase, converts 70S ribosomes to an inactive dimeric form (100S ribosomes).</text>
</comment>
<comment type="subcellular location">
    <subcellularLocation>
        <location evidence="1">Cytoplasm</location>
    </subcellularLocation>
</comment>
<comment type="similarity">
    <text evidence="1">Belongs to the ribosome modulation factor family.</text>
</comment>
<sequence>MKKQKRDLHQRAYVKGYRAGMAGRSKALSERCHTQARQDWLTGWREGREDMWNGLTPVDGTYKAASFSQ</sequence>
<keyword id="KW-0963">Cytoplasm</keyword>
<keyword id="KW-1185">Reference proteome</keyword>
<keyword id="KW-0810">Translation regulation</keyword>
<proteinExistence type="inferred from homology"/>
<feature type="chain" id="PRO_0000416477" description="Ribosome modulation factor">
    <location>
        <begin position="1"/>
        <end position="69"/>
    </location>
</feature>
<reference key="1">
    <citation type="journal article" date="2012" name="Stand. Genomic Sci.">
        <title>Complete genome sequence of the melanogenic marine bacterium Marinomonas mediterranea type strain (MMB-1(T)).</title>
        <authorList>
            <person name="Lucas-Elio P."/>
            <person name="Goodwin L."/>
            <person name="Woyke T."/>
            <person name="Pitluck S."/>
            <person name="Nolan M."/>
            <person name="Kyrpides N.C."/>
            <person name="Detter J.C."/>
            <person name="Copeland A."/>
            <person name="Teshima H."/>
            <person name="Bruce D."/>
            <person name="Detter C."/>
            <person name="Tapia R."/>
            <person name="Han S."/>
            <person name="Land M.L."/>
            <person name="Ivanova N."/>
            <person name="Mikhailova N."/>
            <person name="Johnston A.W."/>
            <person name="Sanchez-Amat A."/>
        </authorList>
    </citation>
    <scope>NUCLEOTIDE SEQUENCE [LARGE SCALE GENOMIC DNA]</scope>
    <source>
        <strain>ATCC 700492 / JCM 21426 / NBRC 103028 / MMB-1</strain>
    </source>
</reference>
<evidence type="ECO:0000255" key="1">
    <source>
        <dbReference type="HAMAP-Rule" id="MF_00919"/>
    </source>
</evidence>
<name>RMF_MARM1</name>
<protein>
    <recommendedName>
        <fullName evidence="1">Ribosome modulation factor</fullName>
        <shortName evidence="1">RMF</shortName>
    </recommendedName>
</protein>
<dbReference type="EMBL" id="CP002583">
    <property type="protein sequence ID" value="ADZ91795.1"/>
    <property type="molecule type" value="Genomic_DNA"/>
</dbReference>
<dbReference type="RefSeq" id="WP_013661699.1">
    <property type="nucleotide sequence ID" value="NC_015276.1"/>
</dbReference>
<dbReference type="SMR" id="F2JWN1"/>
<dbReference type="STRING" id="717774.Marme_2563"/>
<dbReference type="KEGG" id="mme:Marme_2563"/>
<dbReference type="PATRIC" id="fig|717774.3.peg.2648"/>
<dbReference type="eggNOG" id="COG3130">
    <property type="taxonomic scope" value="Bacteria"/>
</dbReference>
<dbReference type="HOGENOM" id="CLU_203350_0_0_6"/>
<dbReference type="OrthoDB" id="5917763at2"/>
<dbReference type="Proteomes" id="UP000001062">
    <property type="component" value="Chromosome"/>
</dbReference>
<dbReference type="GO" id="GO:0005737">
    <property type="term" value="C:cytoplasm"/>
    <property type="evidence" value="ECO:0007669"/>
    <property type="project" value="UniProtKB-SubCell"/>
</dbReference>
<dbReference type="GO" id="GO:0006417">
    <property type="term" value="P:regulation of translation"/>
    <property type="evidence" value="ECO:0007669"/>
    <property type="project" value="UniProtKB-UniRule"/>
</dbReference>
<dbReference type="Gene3D" id="1.10.10.620">
    <property type="entry name" value="ribosome modulation factor like domain"/>
    <property type="match status" value="1"/>
</dbReference>
<dbReference type="HAMAP" id="MF_00919">
    <property type="entry name" value="RMF"/>
    <property type="match status" value="1"/>
</dbReference>
<dbReference type="InterPro" id="IPR007040">
    <property type="entry name" value="Ribosome_modulation_factor"/>
</dbReference>
<dbReference type="InterPro" id="IPR023200">
    <property type="entry name" value="RMF_sf"/>
</dbReference>
<dbReference type="NCBIfam" id="NF011162">
    <property type="entry name" value="PRK14563.1"/>
    <property type="match status" value="1"/>
</dbReference>
<dbReference type="Pfam" id="PF04957">
    <property type="entry name" value="RMF"/>
    <property type="match status" value="1"/>
</dbReference>
<organism>
    <name type="scientific">Marinomonas mediterranea (strain ATCC 700492 / JCM 21426 / NBRC 103028 / MMB-1)</name>
    <dbReference type="NCBI Taxonomy" id="717774"/>
    <lineage>
        <taxon>Bacteria</taxon>
        <taxon>Pseudomonadati</taxon>
        <taxon>Pseudomonadota</taxon>
        <taxon>Gammaproteobacteria</taxon>
        <taxon>Oceanospirillales</taxon>
        <taxon>Oceanospirillaceae</taxon>
        <taxon>Marinomonas</taxon>
    </lineage>
</organism>
<accession>F2JWN1</accession>
<gene>
    <name evidence="1" type="primary">rmf</name>
    <name type="ordered locus">Marme_2563</name>
</gene>